<dbReference type="EMBL" id="X55149">
    <property type="protein sequence ID" value="CAA38950.1"/>
    <property type="molecule type" value="Genomic_DNA"/>
</dbReference>
<dbReference type="EMBL" id="CR382124">
    <property type="protein sequence ID" value="CAH00310.1"/>
    <property type="molecule type" value="Genomic_DNA"/>
</dbReference>
<dbReference type="PIR" id="S13365">
    <property type="entry name" value="S13365"/>
</dbReference>
<dbReference type="RefSeq" id="XP_453214.1">
    <property type="nucleotide sequence ID" value="XM_453214.1"/>
</dbReference>
<dbReference type="PDB" id="1FBQ">
    <property type="method" value="X-ray"/>
    <property type="resolution" value="2.00 A"/>
    <property type="chains" value="A/B=195-281"/>
</dbReference>
<dbReference type="PDB" id="1FBS">
    <property type="method" value="X-ray"/>
    <property type="resolution" value="2.00 A"/>
    <property type="chains" value="A/B=195-281"/>
</dbReference>
<dbReference type="PDB" id="1FBU">
    <property type="method" value="X-ray"/>
    <property type="resolution" value="2.00 A"/>
    <property type="chains" value="A/B=195-281"/>
</dbReference>
<dbReference type="PDB" id="1FYK">
    <property type="method" value="X-ray"/>
    <property type="resolution" value="2.50 A"/>
    <property type="chains" value="A=193-284"/>
</dbReference>
<dbReference type="PDB" id="1FYL">
    <property type="method" value="X-ray"/>
    <property type="resolution" value="2.10 A"/>
    <property type="chains" value="A/B=193-284"/>
</dbReference>
<dbReference type="PDB" id="1FYM">
    <property type="method" value="X-ray"/>
    <property type="resolution" value="2.20 A"/>
    <property type="chains" value="A/B=193-284"/>
</dbReference>
<dbReference type="PDB" id="2HTS">
    <property type="method" value="X-ray"/>
    <property type="resolution" value="1.83 A"/>
    <property type="chains" value="A=193-281"/>
</dbReference>
<dbReference type="PDB" id="3HSF">
    <property type="method" value="NMR"/>
    <property type="chains" value="A=193-281"/>
</dbReference>
<dbReference type="PDB" id="3HTS">
    <property type="method" value="X-ray"/>
    <property type="resolution" value="1.75 A"/>
    <property type="chains" value="B=193-281"/>
</dbReference>
<dbReference type="PDBsum" id="1FBQ"/>
<dbReference type="PDBsum" id="1FBS"/>
<dbReference type="PDBsum" id="1FBU"/>
<dbReference type="PDBsum" id="1FYK"/>
<dbReference type="PDBsum" id="1FYL"/>
<dbReference type="PDBsum" id="1FYM"/>
<dbReference type="PDBsum" id="2HTS"/>
<dbReference type="PDBsum" id="3HSF"/>
<dbReference type="PDBsum" id="3HTS"/>
<dbReference type="SMR" id="P22121"/>
<dbReference type="STRING" id="284590.P22121"/>
<dbReference type="PaxDb" id="284590-P22121"/>
<dbReference type="KEGG" id="kla:KLLA0_D03322g"/>
<dbReference type="eggNOG" id="KOG0627">
    <property type="taxonomic scope" value="Eukaryota"/>
</dbReference>
<dbReference type="HOGENOM" id="CLU_405993_0_0_1"/>
<dbReference type="InParanoid" id="P22121"/>
<dbReference type="EvolutionaryTrace" id="P22121"/>
<dbReference type="Proteomes" id="UP000000598">
    <property type="component" value="Chromosome D"/>
</dbReference>
<dbReference type="GO" id="GO:0005634">
    <property type="term" value="C:nucleus"/>
    <property type="evidence" value="ECO:0007669"/>
    <property type="project" value="UniProtKB-SubCell"/>
</dbReference>
<dbReference type="GO" id="GO:0032993">
    <property type="term" value="C:protein-DNA complex"/>
    <property type="evidence" value="ECO:0000315"/>
    <property type="project" value="CAFA"/>
</dbReference>
<dbReference type="GO" id="GO:0003677">
    <property type="term" value="F:DNA binding"/>
    <property type="evidence" value="ECO:0000315"/>
    <property type="project" value="CAFA"/>
</dbReference>
<dbReference type="GO" id="GO:0003700">
    <property type="term" value="F:DNA-binding transcription factor activity"/>
    <property type="evidence" value="ECO:0007669"/>
    <property type="project" value="InterPro"/>
</dbReference>
<dbReference type="GO" id="GO:0043565">
    <property type="term" value="F:sequence-specific DNA binding"/>
    <property type="evidence" value="ECO:0007669"/>
    <property type="project" value="InterPro"/>
</dbReference>
<dbReference type="DisProt" id="DP00036"/>
<dbReference type="FunFam" id="1.10.10.10:FF:000027">
    <property type="entry name" value="Heat shock transcription factor 1"/>
    <property type="match status" value="1"/>
</dbReference>
<dbReference type="Gene3D" id="1.10.10.10">
    <property type="entry name" value="Winged helix-like DNA-binding domain superfamily/Winged helix DNA-binding domain"/>
    <property type="match status" value="1"/>
</dbReference>
<dbReference type="InterPro" id="IPR000232">
    <property type="entry name" value="HSF_DNA-bd"/>
</dbReference>
<dbReference type="InterPro" id="IPR036388">
    <property type="entry name" value="WH-like_DNA-bd_sf"/>
</dbReference>
<dbReference type="InterPro" id="IPR036390">
    <property type="entry name" value="WH_DNA-bd_sf"/>
</dbReference>
<dbReference type="PANTHER" id="PTHR10015:SF427">
    <property type="entry name" value="HEAT SHOCK FACTOR PROTEIN"/>
    <property type="match status" value="1"/>
</dbReference>
<dbReference type="PANTHER" id="PTHR10015">
    <property type="entry name" value="HEAT SHOCK TRANSCRIPTION FACTOR"/>
    <property type="match status" value="1"/>
</dbReference>
<dbReference type="Pfam" id="PF00447">
    <property type="entry name" value="HSF_DNA-bind"/>
    <property type="match status" value="1"/>
</dbReference>
<dbReference type="PRINTS" id="PR00056">
    <property type="entry name" value="HSFDOMAIN"/>
</dbReference>
<dbReference type="SMART" id="SM00415">
    <property type="entry name" value="HSF"/>
    <property type="match status" value="1"/>
</dbReference>
<dbReference type="SUPFAM" id="SSF46785">
    <property type="entry name" value="Winged helix' DNA-binding domain"/>
    <property type="match status" value="1"/>
</dbReference>
<dbReference type="PROSITE" id="PS00434">
    <property type="entry name" value="HSF_DOMAIN"/>
    <property type="match status" value="1"/>
</dbReference>
<gene>
    <name evidence="6" type="primary">HSF</name>
    <name type="ordered locus">KLLA0D03322g</name>
</gene>
<reference key="1">
    <citation type="journal article" date="1991" name="EMBO J.">
        <title>A conserved heptapeptide restrains the activity of the yeast heat shock transcription factor.</title>
        <authorList>
            <person name="Jakobsen B.K."/>
            <person name="Pelham H.R.B."/>
        </authorList>
    </citation>
    <scope>NUCLEOTIDE SEQUENCE [GENOMIC DNA]</scope>
    <scope>FUNCTION</scope>
    <scope>SUBCELLULAR LOCATION</scope>
    <scope>PHOSPHORYLATION</scope>
</reference>
<reference key="2">
    <citation type="journal article" date="2004" name="Nature">
        <title>Genome evolution in yeasts.</title>
        <authorList>
            <person name="Dujon B."/>
            <person name="Sherman D."/>
            <person name="Fischer G."/>
            <person name="Durrens P."/>
            <person name="Casaregola S."/>
            <person name="Lafontaine I."/>
            <person name="de Montigny J."/>
            <person name="Marck C."/>
            <person name="Neuveglise C."/>
            <person name="Talla E."/>
            <person name="Goffard N."/>
            <person name="Frangeul L."/>
            <person name="Aigle M."/>
            <person name="Anthouard V."/>
            <person name="Babour A."/>
            <person name="Barbe V."/>
            <person name="Barnay S."/>
            <person name="Blanchin S."/>
            <person name="Beckerich J.-M."/>
            <person name="Beyne E."/>
            <person name="Bleykasten C."/>
            <person name="Boisrame A."/>
            <person name="Boyer J."/>
            <person name="Cattolico L."/>
            <person name="Confanioleri F."/>
            <person name="de Daruvar A."/>
            <person name="Despons L."/>
            <person name="Fabre E."/>
            <person name="Fairhead C."/>
            <person name="Ferry-Dumazet H."/>
            <person name="Groppi A."/>
            <person name="Hantraye F."/>
            <person name="Hennequin C."/>
            <person name="Jauniaux N."/>
            <person name="Joyet P."/>
            <person name="Kachouri R."/>
            <person name="Kerrest A."/>
            <person name="Koszul R."/>
            <person name="Lemaire M."/>
            <person name="Lesur I."/>
            <person name="Ma L."/>
            <person name="Muller H."/>
            <person name="Nicaud J.-M."/>
            <person name="Nikolski M."/>
            <person name="Oztas S."/>
            <person name="Ozier-Kalogeropoulos O."/>
            <person name="Pellenz S."/>
            <person name="Potier S."/>
            <person name="Richard G.-F."/>
            <person name="Straub M.-L."/>
            <person name="Suleau A."/>
            <person name="Swennen D."/>
            <person name="Tekaia F."/>
            <person name="Wesolowski-Louvel M."/>
            <person name="Westhof E."/>
            <person name="Wirth B."/>
            <person name="Zeniou-Meyer M."/>
            <person name="Zivanovic Y."/>
            <person name="Bolotin-Fukuhara M."/>
            <person name="Thierry A."/>
            <person name="Bouchier C."/>
            <person name="Caudron B."/>
            <person name="Scarpelli C."/>
            <person name="Gaillardin C."/>
            <person name="Weissenbach J."/>
            <person name="Wincker P."/>
            <person name="Souciet J.-L."/>
        </authorList>
    </citation>
    <scope>NUCLEOTIDE SEQUENCE [LARGE SCALE GENOMIC DNA]</scope>
    <source>
        <strain>ATCC 8585 / CBS 2359 / DSM 70799 / NBRC 1267 / NRRL Y-1140 / WM37</strain>
    </source>
</reference>
<reference key="3">
    <citation type="journal article" date="1999" name="Biochemistry">
        <title>Biochemical and biophysical characterization of the trimerization domain from the heat shock transcription factor.</title>
        <authorList>
            <person name="Peteranderl R."/>
            <person name="Rabenstein M."/>
            <person name="Shin Y.K."/>
            <person name="Liu C.W."/>
            <person name="Wemmer D.E."/>
            <person name="King D.S."/>
            <person name="Nelson H.C."/>
        </authorList>
    </citation>
    <scope>SUBUNIT</scope>
</reference>
<reference key="4">
    <citation type="journal article" date="1994" name="Science">
        <title>Crystal structure of the DNA binding domain of the heat shock transcription factor.</title>
        <authorList>
            <person name="Harrison C.J."/>
            <person name="Bohm A.A."/>
            <person name="Nelson H.C.M."/>
        </authorList>
    </citation>
    <scope>X-RAY CRYSTALLOGRAPHY (1.8 ANGSTROMS) OF 193-281</scope>
</reference>
<feature type="chain" id="PRO_0000124579" description="Heat shock transcription factor">
    <location>
        <begin position="1"/>
        <end position="677"/>
    </location>
</feature>
<feature type="DNA-binding region" evidence="2">
    <location>
        <begin position="193"/>
        <end position="297"/>
    </location>
</feature>
<feature type="region of interest" description="Disordered" evidence="3">
    <location>
        <begin position="1"/>
        <end position="56"/>
    </location>
</feature>
<feature type="region of interest" description="Disordered" evidence="3">
    <location>
        <begin position="115"/>
        <end position="164"/>
    </location>
</feature>
<feature type="region of interest" description="Involved in trimerization" evidence="8">
    <location>
        <begin position="320"/>
        <end position="373"/>
    </location>
</feature>
<feature type="region of interest" description="Disordered" evidence="3">
    <location>
        <begin position="400"/>
        <end position="444"/>
    </location>
</feature>
<feature type="region of interest" description="Disordered" evidence="3">
    <location>
        <begin position="457"/>
        <end position="541"/>
    </location>
</feature>
<feature type="region of interest" description="Activatory">
    <location>
        <begin position="466"/>
        <end position="677"/>
    </location>
</feature>
<feature type="region of interest" description="Disordered" evidence="3">
    <location>
        <begin position="606"/>
        <end position="677"/>
    </location>
</feature>
<feature type="compositionally biased region" description="Polar residues" evidence="3">
    <location>
        <begin position="115"/>
        <end position="131"/>
    </location>
</feature>
<feature type="compositionally biased region" description="Polar residues" evidence="3">
    <location>
        <begin position="143"/>
        <end position="164"/>
    </location>
</feature>
<feature type="compositionally biased region" description="Low complexity" evidence="3">
    <location>
        <begin position="400"/>
        <end position="416"/>
    </location>
</feature>
<feature type="compositionally biased region" description="Low complexity" evidence="3">
    <location>
        <begin position="457"/>
        <end position="501"/>
    </location>
</feature>
<feature type="compositionally biased region" description="Polar residues" evidence="3">
    <location>
        <begin position="502"/>
        <end position="541"/>
    </location>
</feature>
<feature type="compositionally biased region" description="Polar residues" evidence="3">
    <location>
        <begin position="629"/>
        <end position="641"/>
    </location>
</feature>
<feature type="compositionally biased region" description="Basic and acidic residues" evidence="3">
    <location>
        <begin position="650"/>
        <end position="669"/>
    </location>
</feature>
<feature type="helix" evidence="12">
    <location>
        <begin position="196"/>
        <end position="206"/>
    </location>
</feature>
<feature type="helix" evidence="12">
    <location>
        <begin position="208"/>
        <end position="210"/>
    </location>
</feature>
<feature type="turn" evidence="12">
    <location>
        <begin position="211"/>
        <end position="213"/>
    </location>
</feature>
<feature type="strand" evidence="12">
    <location>
        <begin position="214"/>
        <end position="216"/>
    </location>
</feature>
<feature type="strand" evidence="10">
    <location>
        <begin position="218"/>
        <end position="221"/>
    </location>
</feature>
<feature type="strand" evidence="12">
    <location>
        <begin position="222"/>
        <end position="226"/>
    </location>
</feature>
<feature type="helix" evidence="12">
    <location>
        <begin position="228"/>
        <end position="234"/>
    </location>
</feature>
<feature type="helix" evidence="12">
    <location>
        <begin position="236"/>
        <end position="239"/>
    </location>
</feature>
<feature type="strand" evidence="11">
    <location>
        <begin position="240"/>
        <end position="242"/>
    </location>
</feature>
<feature type="helix" evidence="12">
    <location>
        <begin position="245"/>
        <end position="254"/>
    </location>
</feature>
<feature type="strand" evidence="12">
    <location>
        <begin position="257"/>
        <end position="259"/>
    </location>
</feature>
<feature type="turn" evidence="10">
    <location>
        <begin position="266"/>
        <end position="269"/>
    </location>
</feature>
<feature type="strand" evidence="12">
    <location>
        <begin position="276"/>
        <end position="280"/>
    </location>
</feature>
<comment type="function">
    <text evidence="5">DNA-binding transcription factor that specifically binds heat shock promoter elements (HSE) and activates transcription.</text>
</comment>
<comment type="subunit">
    <text evidence="1 4">Homotrimer (PubMed:10090742). Homotrimerization increases the affinity of HSF1 to DNA (By similarity).</text>
</comment>
<comment type="subcellular location">
    <subcellularLocation>
        <location evidence="9">Nucleus</location>
    </subcellularLocation>
</comment>
<comment type="PTM">
    <text evidence="9">Exhibits temperature-dependent phosphorylation.</text>
</comment>
<comment type="similarity">
    <text evidence="7">Belongs to the HSF family.</text>
</comment>
<evidence type="ECO:0000250" key="1">
    <source>
        <dbReference type="UniProtKB" id="P10961"/>
    </source>
</evidence>
<evidence type="ECO:0000255" key="2"/>
<evidence type="ECO:0000256" key="3">
    <source>
        <dbReference type="SAM" id="MobiDB-lite"/>
    </source>
</evidence>
<evidence type="ECO:0000269" key="4">
    <source>
    </source>
</evidence>
<evidence type="ECO:0000269" key="5">
    <source>
    </source>
</evidence>
<evidence type="ECO:0000303" key="6">
    <source>
    </source>
</evidence>
<evidence type="ECO:0000305" key="7"/>
<evidence type="ECO:0000305" key="8">
    <source>
    </source>
</evidence>
<evidence type="ECO:0000305" key="9">
    <source>
    </source>
</evidence>
<evidence type="ECO:0007829" key="10">
    <source>
        <dbReference type="PDB" id="1FBQ"/>
    </source>
</evidence>
<evidence type="ECO:0007829" key="11">
    <source>
        <dbReference type="PDB" id="1FBS"/>
    </source>
</evidence>
<evidence type="ECO:0007829" key="12">
    <source>
        <dbReference type="PDB" id="3HTS"/>
    </source>
</evidence>
<protein>
    <recommendedName>
        <fullName evidence="6">Heat shock transcription factor</fullName>
        <shortName evidence="7">HSTF</shortName>
    </recommendedName>
    <alternativeName>
        <fullName evidence="7">Heat shock factor protein</fullName>
        <shortName evidence="6">HSF</shortName>
    </alternativeName>
</protein>
<sequence length="677" mass="75420">MGHNDSVETMDEISNPNNILLPHDGTGLDATGISGSQEPYGMVDVLNPDSLKDDSNVDEPLIEDIVNPSLDPEGVVSAEPSNEVGTPLLQQPISLDHVITRPASAGGVYSIGNSSTSSAAKLSDGDLTNATDPLLNNAHGHGQPSSESQSHSNGYHKQGQSQQPLLSLNKRKLLAKAHVDKHHSKKKLSTTRARPAFVNKLWSMVNDKSNEKFIHWSTSGESIVVPNRERFVQEVLPKYFKHSNFASFVRQLNMYGWHKVQDVKSGSMLSNNDSRWEFENENFKRGKEYLLENIVRQKSNTNILGGTTNAEVDIHILLNELETVKYNQLAIAEDLKRITKDNEMLWKENMMARERHQSQQQVLEKLLRFLSSVFGPNSAKTIGNGFQPDLIHELSDMQVNHMSNNNHNNTGNINPNAYHNETDDPMANVFGPLTPTDQGKVPLQDYKLRPRLLLKNRSMSSSSSSNLNQRQSPQNRIVGQSPPPQQQQQQQQQQGQPQGQQFSYPIQGGNQMMNQLGSPIGTQVGSPVGSQYGNQYGNQYSNQFGNQLQQQTSRPALHHGSNGEIRELTPSIVSSDSPDPAFFQDLQNNIDKQEESIQEIQDWITKLNPGPGEDGNTPIFPELNMPSYFANTGGSGQSEQPSDYGDSQIEELRNSRLHEPDRSFEEKNNGQKRRRAA</sequence>
<name>HSF_KLULA</name>
<organism>
    <name type="scientific">Kluyveromyces lactis (strain ATCC 8585 / CBS 2359 / DSM 70799 / NBRC 1267 / NRRL Y-1140 / WM37)</name>
    <name type="common">Yeast</name>
    <name type="synonym">Candida sphaerica</name>
    <dbReference type="NCBI Taxonomy" id="284590"/>
    <lineage>
        <taxon>Eukaryota</taxon>
        <taxon>Fungi</taxon>
        <taxon>Dikarya</taxon>
        <taxon>Ascomycota</taxon>
        <taxon>Saccharomycotina</taxon>
        <taxon>Saccharomycetes</taxon>
        <taxon>Saccharomycetales</taxon>
        <taxon>Saccharomycetaceae</taxon>
        <taxon>Kluyveromyces</taxon>
    </lineage>
</organism>
<accession>P22121</accession>
<keyword id="KW-0002">3D-structure</keyword>
<keyword id="KW-0010">Activator</keyword>
<keyword id="KW-0238">DNA-binding</keyword>
<keyword id="KW-0539">Nucleus</keyword>
<keyword id="KW-0597">Phosphoprotein</keyword>
<keyword id="KW-1185">Reference proteome</keyword>
<keyword id="KW-0346">Stress response</keyword>
<keyword id="KW-0804">Transcription</keyword>
<keyword id="KW-0805">Transcription regulation</keyword>
<proteinExistence type="evidence at protein level"/>